<proteinExistence type="evidence at protein level"/>
<accession>P69101</accession>
<accession>P29949</accession>
<sequence>YPSKPDNPGEDAPAEDMAKYYSALRHYINLITRQRY</sequence>
<protein>
    <recommendedName>
        <fullName>Melanostatin</fullName>
    </recommendedName>
    <alternativeName>
        <fullName>Melanotropin release-inhibiting factor</fullName>
    </alternativeName>
    <alternativeName>
        <fullName>Neuropeptide Y</fullName>
        <shortName>NPY</shortName>
    </alternativeName>
</protein>
<name>NPY_PELRI</name>
<feature type="peptide" id="PRO_0000044792" description="Melanostatin">
    <location>
        <begin position="1"/>
        <end position="36"/>
    </location>
</feature>
<feature type="modified residue" description="Tyrosine amide" evidence="1">
    <location>
        <position position="36"/>
    </location>
</feature>
<keyword id="KW-0027">Amidation</keyword>
<keyword id="KW-0903">Direct protein sequencing</keyword>
<keyword id="KW-0527">Neuropeptide</keyword>
<keyword id="KW-0964">Secreted</keyword>
<organism>
    <name type="scientific">Pelophylax ridibundus</name>
    <name type="common">Marsh frog</name>
    <name type="synonym">Rana ridibunda</name>
    <dbReference type="NCBI Taxonomy" id="8406"/>
    <lineage>
        <taxon>Eukaryota</taxon>
        <taxon>Metazoa</taxon>
        <taxon>Chordata</taxon>
        <taxon>Craniata</taxon>
        <taxon>Vertebrata</taxon>
        <taxon>Euteleostomi</taxon>
        <taxon>Amphibia</taxon>
        <taxon>Batrachia</taxon>
        <taxon>Anura</taxon>
        <taxon>Neobatrachia</taxon>
        <taxon>Ranoidea</taxon>
        <taxon>Ranidae</taxon>
        <taxon>Pelophylax</taxon>
    </lineage>
</organism>
<comment type="function">
    <text>NPY is implicated in the control of feeding and in secretion of gonadotrophin-release hormone. NPY may play a physiological role in the regulation of pituitary melanotrophs.</text>
</comment>
<comment type="subcellular location">
    <subcellularLocation>
        <location>Secreted</location>
    </subcellularLocation>
</comment>
<comment type="similarity">
    <text evidence="2">Belongs to the NPY family.</text>
</comment>
<dbReference type="PIR" id="A39393">
    <property type="entry name" value="A39393"/>
</dbReference>
<dbReference type="SMR" id="P69101"/>
<dbReference type="GO" id="GO:0005615">
    <property type="term" value="C:extracellular space"/>
    <property type="evidence" value="ECO:0007669"/>
    <property type="project" value="TreeGrafter"/>
</dbReference>
<dbReference type="GO" id="GO:0005184">
    <property type="term" value="F:neuropeptide hormone activity"/>
    <property type="evidence" value="ECO:0007669"/>
    <property type="project" value="TreeGrafter"/>
</dbReference>
<dbReference type="GO" id="GO:0031841">
    <property type="term" value="F:neuropeptide Y receptor binding"/>
    <property type="evidence" value="ECO:0007669"/>
    <property type="project" value="TreeGrafter"/>
</dbReference>
<dbReference type="GO" id="GO:0007631">
    <property type="term" value="P:feeding behavior"/>
    <property type="evidence" value="ECO:0007669"/>
    <property type="project" value="TreeGrafter"/>
</dbReference>
<dbReference type="GO" id="GO:0007218">
    <property type="term" value="P:neuropeptide signaling pathway"/>
    <property type="evidence" value="ECO:0007669"/>
    <property type="project" value="UniProtKB-KW"/>
</dbReference>
<dbReference type="CDD" id="cd00126">
    <property type="entry name" value="PAH"/>
    <property type="match status" value="1"/>
</dbReference>
<dbReference type="Gene3D" id="6.10.250.900">
    <property type="match status" value="1"/>
</dbReference>
<dbReference type="InterPro" id="IPR001955">
    <property type="entry name" value="Pancreatic_hormone-like"/>
</dbReference>
<dbReference type="InterPro" id="IPR020392">
    <property type="entry name" value="Pancreatic_hormone-like_CS"/>
</dbReference>
<dbReference type="PANTHER" id="PTHR10533">
    <property type="entry name" value="NEUROPEPTIDE Y/PANCREATIC HORMONE/PEPTIDE YY"/>
    <property type="match status" value="1"/>
</dbReference>
<dbReference type="PANTHER" id="PTHR10533:SF5">
    <property type="entry name" value="PRO-NEUROPEPTIDE Y"/>
    <property type="match status" value="1"/>
</dbReference>
<dbReference type="Pfam" id="PF00159">
    <property type="entry name" value="Hormone_3"/>
    <property type="match status" value="1"/>
</dbReference>
<dbReference type="PRINTS" id="PR00278">
    <property type="entry name" value="PANCHORMONE"/>
</dbReference>
<dbReference type="SMART" id="SM00309">
    <property type="entry name" value="PAH"/>
    <property type="match status" value="1"/>
</dbReference>
<dbReference type="PROSITE" id="PS00265">
    <property type="entry name" value="PANCREATIC_HORMONE_1"/>
    <property type="match status" value="1"/>
</dbReference>
<dbReference type="PROSITE" id="PS50276">
    <property type="entry name" value="PANCREATIC_HORMONE_2"/>
    <property type="match status" value="1"/>
</dbReference>
<evidence type="ECO:0000269" key="1">
    <source>
    </source>
</evidence>
<evidence type="ECO:0000305" key="2"/>
<reference key="1">
    <citation type="journal article" date="1991" name="Proc. Natl. Acad. Sci. U.S.A.">
        <title>Characterization of melanotropin-release-inhibiting factor (melanostatin) from frog brain: homology with human neuropeptide Y.</title>
        <authorList>
            <person name="Chartrel N."/>
            <person name="Conlon J.M."/>
            <person name="Danger J.-M."/>
            <person name="Fournier A."/>
            <person name="Tonon M.-C."/>
            <person name="Vaudry H."/>
        </authorList>
    </citation>
    <scope>PROTEIN SEQUENCE</scope>
    <scope>AMIDATION AT TYR-36</scope>
    <source>
        <tissue>Brain</tissue>
    </source>
</reference>